<protein>
    <recommendedName>
        <fullName evidence="1">Ribosomal RNA large subunit methyltransferase K/L</fullName>
    </recommendedName>
    <domain>
        <recommendedName>
            <fullName evidence="1">23S rRNA m2G2445 methyltransferase</fullName>
            <ecNumber evidence="1">2.1.1.173</ecNumber>
        </recommendedName>
        <alternativeName>
            <fullName evidence="1">rRNA (guanine-N(2)-)-methyltransferase RlmL</fullName>
        </alternativeName>
    </domain>
    <domain>
        <recommendedName>
            <fullName evidence="1">23S rRNA m7G2069 methyltransferase</fullName>
            <ecNumber evidence="1">2.1.1.264</ecNumber>
        </recommendedName>
        <alternativeName>
            <fullName evidence="1">rRNA (guanine-N(7)-)-methyltransferase RlmK</fullName>
        </alternativeName>
    </domain>
</protein>
<reference key="1">
    <citation type="submission" date="2008-05" db="EMBL/GenBank/DDBJ databases">
        <title>Complete sequence of Shigella boydii serotype 18 strain BS512.</title>
        <authorList>
            <person name="Rasko D.A."/>
            <person name="Rosovitz M."/>
            <person name="Maurelli A.T."/>
            <person name="Myers G."/>
            <person name="Seshadri R."/>
            <person name="Cer R."/>
            <person name="Jiang L."/>
            <person name="Ravel J."/>
            <person name="Sebastian Y."/>
        </authorList>
    </citation>
    <scope>NUCLEOTIDE SEQUENCE [LARGE SCALE GENOMIC DNA]</scope>
    <source>
        <strain>CDC 3083-94 / BS512</strain>
    </source>
</reference>
<proteinExistence type="inferred from homology"/>
<comment type="function">
    <text evidence="1">Specifically methylates the guanine in position 2445 (m2G2445) and the guanine in position 2069 (m7G2069) of 23S rRNA.</text>
</comment>
<comment type="catalytic activity">
    <reaction evidence="1">
        <text>guanosine(2445) in 23S rRNA + S-adenosyl-L-methionine = N(2)-methylguanosine(2445) in 23S rRNA + S-adenosyl-L-homocysteine + H(+)</text>
        <dbReference type="Rhea" id="RHEA:42740"/>
        <dbReference type="Rhea" id="RHEA-COMP:10215"/>
        <dbReference type="Rhea" id="RHEA-COMP:10216"/>
        <dbReference type="ChEBI" id="CHEBI:15378"/>
        <dbReference type="ChEBI" id="CHEBI:57856"/>
        <dbReference type="ChEBI" id="CHEBI:59789"/>
        <dbReference type="ChEBI" id="CHEBI:74269"/>
        <dbReference type="ChEBI" id="CHEBI:74481"/>
        <dbReference type="EC" id="2.1.1.173"/>
    </reaction>
</comment>
<comment type="catalytic activity">
    <reaction evidence="1">
        <text>guanosine(2069) in 23S rRNA + S-adenosyl-L-methionine = N(2)-methylguanosine(2069) in 23S rRNA + S-adenosyl-L-homocysteine + H(+)</text>
        <dbReference type="Rhea" id="RHEA:43772"/>
        <dbReference type="Rhea" id="RHEA-COMP:10688"/>
        <dbReference type="Rhea" id="RHEA-COMP:10689"/>
        <dbReference type="ChEBI" id="CHEBI:15378"/>
        <dbReference type="ChEBI" id="CHEBI:57856"/>
        <dbReference type="ChEBI" id="CHEBI:59789"/>
        <dbReference type="ChEBI" id="CHEBI:74269"/>
        <dbReference type="ChEBI" id="CHEBI:74481"/>
        <dbReference type="EC" id="2.1.1.264"/>
    </reaction>
</comment>
<comment type="subcellular location">
    <subcellularLocation>
        <location evidence="1">Cytoplasm</location>
    </subcellularLocation>
</comment>
<comment type="similarity">
    <text evidence="1">Belongs to the methyltransferase superfamily. RlmKL family.</text>
</comment>
<accession>B2TUD1</accession>
<feature type="chain" id="PRO_0000366836" description="Ribosomal RNA large subunit methyltransferase K/L">
    <location>
        <begin position="1"/>
        <end position="702"/>
    </location>
</feature>
<feature type="domain" description="THUMP" evidence="1">
    <location>
        <begin position="43"/>
        <end position="154"/>
    </location>
</feature>
<evidence type="ECO:0000255" key="1">
    <source>
        <dbReference type="HAMAP-Rule" id="MF_01858"/>
    </source>
</evidence>
<organism>
    <name type="scientific">Shigella boydii serotype 18 (strain CDC 3083-94 / BS512)</name>
    <dbReference type="NCBI Taxonomy" id="344609"/>
    <lineage>
        <taxon>Bacteria</taxon>
        <taxon>Pseudomonadati</taxon>
        <taxon>Pseudomonadota</taxon>
        <taxon>Gammaproteobacteria</taxon>
        <taxon>Enterobacterales</taxon>
        <taxon>Enterobacteriaceae</taxon>
        <taxon>Shigella</taxon>
    </lineage>
</organism>
<name>RLMKL_SHIB3</name>
<keyword id="KW-0963">Cytoplasm</keyword>
<keyword id="KW-0489">Methyltransferase</keyword>
<keyword id="KW-1185">Reference proteome</keyword>
<keyword id="KW-0694">RNA-binding</keyword>
<keyword id="KW-0698">rRNA processing</keyword>
<keyword id="KW-0949">S-adenosyl-L-methionine</keyword>
<keyword id="KW-0808">Transferase</keyword>
<sequence length="702" mass="78870">MNSLFASTARGLEELLKTELENLGAVECQVVQGGVHFKGDTRLVYQSLMWSRLASRIMLPLGECKVYSDLDLYLGVQAINWTEMFNPGATFAVHFSGLNDTIRNSQYGAMKVKDAIVDAFTRKNLPRPNVDRDAPDIRVNVWLHKETASIALDLSGDGLHLRGYRDRAGIAPIKETLAAAIVMRSGWQPGTPLLDPMCGSGTLLIEAAMLATDRAPGLHRGRWGFSGWAQHDEAIWQEVKAEAQTRARKGLAEYSSHFYGSDSDARVIQRARTNARLAGIAELITFEVKDVAQLTNPLLKGPYGTVLSNPPYGERLDSEPALIALHSLLGRIMKNQFGGWNLSLFSASPDLLSCLQLRADKQYKAKNGPLDCVQKNYHVAESTPDSKPAMVAEDYANRLRKNLKKFEKWARQEGIECYRLYDADLPEYNVAVDRYSDWVVVQEYAPPKTIDAHKARQRLFDIIAATISVLGIAPNKLVLKTRERQKGKNQYQKLGEKGEFLEVTEYNAHLWVNLTDYLDTGLFLDHRIARRMLGQMSKGKDFLNLFSYTGSATVHAGLGGARSTTTVDMSRTYLEWAERNLRLNGLTGRAHRLIQADCLAWLREANEQFDLIFIDPPTFSNSKRMEDAFDVQRDHLALMKDLKRLLRAGGTIMFSNNKRGFRMDLDGLAKLGLKAQEITQKTLSQDFARNRQIHNCWLITAA</sequence>
<gene>
    <name evidence="1" type="primary">rlmL</name>
    <name type="ordered locus">SbBS512_E2369</name>
</gene>
<dbReference type="EC" id="2.1.1.173" evidence="1"/>
<dbReference type="EC" id="2.1.1.264" evidence="1"/>
<dbReference type="EMBL" id="CP001063">
    <property type="protein sequence ID" value="ACD10461.1"/>
    <property type="molecule type" value="Genomic_DNA"/>
</dbReference>
<dbReference type="SMR" id="B2TUD1"/>
<dbReference type="STRING" id="344609.SbBS512_E2369"/>
<dbReference type="KEGG" id="sbc:SbBS512_E2369"/>
<dbReference type="HOGENOM" id="CLU_014042_2_0_6"/>
<dbReference type="Proteomes" id="UP000001030">
    <property type="component" value="Chromosome"/>
</dbReference>
<dbReference type="GO" id="GO:0005737">
    <property type="term" value="C:cytoplasm"/>
    <property type="evidence" value="ECO:0007669"/>
    <property type="project" value="UniProtKB-SubCell"/>
</dbReference>
<dbReference type="GO" id="GO:0052915">
    <property type="term" value="F:23S rRNA (guanine(2445)-N(2))-methyltransferase activity"/>
    <property type="evidence" value="ECO:0007669"/>
    <property type="project" value="UniProtKB-UniRule"/>
</dbReference>
<dbReference type="GO" id="GO:0003723">
    <property type="term" value="F:RNA binding"/>
    <property type="evidence" value="ECO:0007669"/>
    <property type="project" value="UniProtKB-KW"/>
</dbReference>
<dbReference type="GO" id="GO:0070043">
    <property type="term" value="F:rRNA (guanine-N7-)-methyltransferase activity"/>
    <property type="evidence" value="ECO:0007669"/>
    <property type="project" value="UniProtKB-UniRule"/>
</dbReference>
<dbReference type="CDD" id="cd02440">
    <property type="entry name" value="AdoMet_MTases"/>
    <property type="match status" value="1"/>
</dbReference>
<dbReference type="CDD" id="cd11715">
    <property type="entry name" value="THUMP_AdoMetMT"/>
    <property type="match status" value="1"/>
</dbReference>
<dbReference type="FunFam" id="3.30.750.80:FF:000001">
    <property type="entry name" value="Ribosomal RNA large subunit methyltransferase K/L"/>
    <property type="match status" value="1"/>
</dbReference>
<dbReference type="FunFam" id="3.40.50.150:FF:000039">
    <property type="entry name" value="Ribosomal RNA large subunit methyltransferase K/L"/>
    <property type="match status" value="1"/>
</dbReference>
<dbReference type="Gene3D" id="3.30.2130.30">
    <property type="match status" value="1"/>
</dbReference>
<dbReference type="Gene3D" id="3.30.750.80">
    <property type="entry name" value="RNA methyltransferase domain (HRMD) like"/>
    <property type="match status" value="1"/>
</dbReference>
<dbReference type="Gene3D" id="3.40.50.150">
    <property type="entry name" value="Vaccinia Virus protein VP39"/>
    <property type="match status" value="2"/>
</dbReference>
<dbReference type="HAMAP" id="MF_01858">
    <property type="entry name" value="23SrRNA_methyltr_KL"/>
    <property type="match status" value="1"/>
</dbReference>
<dbReference type="InterPro" id="IPR017244">
    <property type="entry name" value="23SrRNA_methyltr_KL"/>
</dbReference>
<dbReference type="InterPro" id="IPR002052">
    <property type="entry name" value="DNA_methylase_N6_adenine_CS"/>
</dbReference>
<dbReference type="InterPro" id="IPR000241">
    <property type="entry name" value="RlmKL-like_Mtase"/>
</dbReference>
<dbReference type="InterPro" id="IPR053943">
    <property type="entry name" value="RlmKL-like_Mtase_CS"/>
</dbReference>
<dbReference type="InterPro" id="IPR054170">
    <property type="entry name" value="RlmL_1st"/>
</dbReference>
<dbReference type="InterPro" id="IPR019614">
    <property type="entry name" value="SAM-dep_methyl-trfase"/>
</dbReference>
<dbReference type="InterPro" id="IPR029063">
    <property type="entry name" value="SAM-dependent_MTases_sf"/>
</dbReference>
<dbReference type="InterPro" id="IPR004114">
    <property type="entry name" value="THUMP_dom"/>
</dbReference>
<dbReference type="NCBIfam" id="NF008748">
    <property type="entry name" value="PRK11783.1"/>
    <property type="match status" value="1"/>
</dbReference>
<dbReference type="PANTHER" id="PTHR47313">
    <property type="entry name" value="RIBOSOMAL RNA LARGE SUBUNIT METHYLTRANSFERASE K/L"/>
    <property type="match status" value="1"/>
</dbReference>
<dbReference type="PANTHER" id="PTHR47313:SF1">
    <property type="entry name" value="RIBOSOMAL RNA LARGE SUBUNIT METHYLTRANSFERASE K_L"/>
    <property type="match status" value="1"/>
</dbReference>
<dbReference type="Pfam" id="PF10672">
    <property type="entry name" value="Methyltrans_SAM"/>
    <property type="match status" value="1"/>
</dbReference>
<dbReference type="Pfam" id="PF22020">
    <property type="entry name" value="RlmL_1st"/>
    <property type="match status" value="1"/>
</dbReference>
<dbReference type="Pfam" id="PF02926">
    <property type="entry name" value="THUMP"/>
    <property type="match status" value="1"/>
</dbReference>
<dbReference type="Pfam" id="PF01170">
    <property type="entry name" value="UPF0020"/>
    <property type="match status" value="1"/>
</dbReference>
<dbReference type="PIRSF" id="PIRSF037618">
    <property type="entry name" value="RNA_Mtase_bacteria_prd"/>
    <property type="match status" value="1"/>
</dbReference>
<dbReference type="PRINTS" id="PR00507">
    <property type="entry name" value="N12N6MTFRASE"/>
</dbReference>
<dbReference type="SMART" id="SM00981">
    <property type="entry name" value="THUMP"/>
    <property type="match status" value="1"/>
</dbReference>
<dbReference type="SUPFAM" id="SSF53335">
    <property type="entry name" value="S-adenosyl-L-methionine-dependent methyltransferases"/>
    <property type="match status" value="2"/>
</dbReference>
<dbReference type="PROSITE" id="PS51165">
    <property type="entry name" value="THUMP"/>
    <property type="match status" value="1"/>
</dbReference>
<dbReference type="PROSITE" id="PS01261">
    <property type="entry name" value="UPF0020"/>
    <property type="match status" value="1"/>
</dbReference>